<dbReference type="EC" id="6.1.1.16" evidence="1"/>
<dbReference type="EMBL" id="CP000482">
    <property type="protein sequence ID" value="ABK97671.1"/>
    <property type="molecule type" value="Genomic_DNA"/>
</dbReference>
<dbReference type="RefSeq" id="WP_011733986.1">
    <property type="nucleotide sequence ID" value="NC_008609.1"/>
</dbReference>
<dbReference type="SMR" id="A1AK01"/>
<dbReference type="STRING" id="338966.Ppro_0031"/>
<dbReference type="KEGG" id="ppd:Ppro_0031"/>
<dbReference type="eggNOG" id="COG0215">
    <property type="taxonomic scope" value="Bacteria"/>
</dbReference>
<dbReference type="HOGENOM" id="CLU_013528_0_1_7"/>
<dbReference type="OrthoDB" id="9815130at2"/>
<dbReference type="Proteomes" id="UP000006732">
    <property type="component" value="Chromosome"/>
</dbReference>
<dbReference type="GO" id="GO:0005829">
    <property type="term" value="C:cytosol"/>
    <property type="evidence" value="ECO:0007669"/>
    <property type="project" value="TreeGrafter"/>
</dbReference>
<dbReference type="GO" id="GO:0005524">
    <property type="term" value="F:ATP binding"/>
    <property type="evidence" value="ECO:0007669"/>
    <property type="project" value="UniProtKB-UniRule"/>
</dbReference>
<dbReference type="GO" id="GO:0004817">
    <property type="term" value="F:cysteine-tRNA ligase activity"/>
    <property type="evidence" value="ECO:0007669"/>
    <property type="project" value="UniProtKB-UniRule"/>
</dbReference>
<dbReference type="GO" id="GO:0008270">
    <property type="term" value="F:zinc ion binding"/>
    <property type="evidence" value="ECO:0007669"/>
    <property type="project" value="UniProtKB-UniRule"/>
</dbReference>
<dbReference type="GO" id="GO:0006423">
    <property type="term" value="P:cysteinyl-tRNA aminoacylation"/>
    <property type="evidence" value="ECO:0007669"/>
    <property type="project" value="UniProtKB-UniRule"/>
</dbReference>
<dbReference type="CDD" id="cd07963">
    <property type="entry name" value="Anticodon_Ia_Cys"/>
    <property type="match status" value="1"/>
</dbReference>
<dbReference type="CDD" id="cd00672">
    <property type="entry name" value="CysRS_core"/>
    <property type="match status" value="1"/>
</dbReference>
<dbReference type="FunFam" id="3.40.50.620:FF:000009">
    <property type="entry name" value="Cysteine--tRNA ligase"/>
    <property type="match status" value="1"/>
</dbReference>
<dbReference type="Gene3D" id="1.20.120.1910">
    <property type="entry name" value="Cysteine-tRNA ligase, C-terminal anti-codon recognition domain"/>
    <property type="match status" value="1"/>
</dbReference>
<dbReference type="Gene3D" id="3.40.50.620">
    <property type="entry name" value="HUPs"/>
    <property type="match status" value="1"/>
</dbReference>
<dbReference type="HAMAP" id="MF_00041">
    <property type="entry name" value="Cys_tRNA_synth"/>
    <property type="match status" value="1"/>
</dbReference>
<dbReference type="InterPro" id="IPR015803">
    <property type="entry name" value="Cys-tRNA-ligase"/>
</dbReference>
<dbReference type="InterPro" id="IPR015273">
    <property type="entry name" value="Cys-tRNA-synt_Ia_DALR"/>
</dbReference>
<dbReference type="InterPro" id="IPR024909">
    <property type="entry name" value="Cys-tRNA/MSH_ligase"/>
</dbReference>
<dbReference type="InterPro" id="IPR014729">
    <property type="entry name" value="Rossmann-like_a/b/a_fold"/>
</dbReference>
<dbReference type="InterPro" id="IPR032678">
    <property type="entry name" value="tRNA-synt_1_cat_dom"/>
</dbReference>
<dbReference type="InterPro" id="IPR009080">
    <property type="entry name" value="tRNAsynth_Ia_anticodon-bd"/>
</dbReference>
<dbReference type="NCBIfam" id="TIGR00435">
    <property type="entry name" value="cysS"/>
    <property type="match status" value="1"/>
</dbReference>
<dbReference type="PANTHER" id="PTHR10890:SF3">
    <property type="entry name" value="CYSTEINE--TRNA LIGASE, CYTOPLASMIC"/>
    <property type="match status" value="1"/>
</dbReference>
<dbReference type="PANTHER" id="PTHR10890">
    <property type="entry name" value="CYSTEINYL-TRNA SYNTHETASE"/>
    <property type="match status" value="1"/>
</dbReference>
<dbReference type="Pfam" id="PF09190">
    <property type="entry name" value="DALR_2"/>
    <property type="match status" value="1"/>
</dbReference>
<dbReference type="Pfam" id="PF01406">
    <property type="entry name" value="tRNA-synt_1e"/>
    <property type="match status" value="1"/>
</dbReference>
<dbReference type="PRINTS" id="PR00983">
    <property type="entry name" value="TRNASYNTHCYS"/>
</dbReference>
<dbReference type="SMART" id="SM00840">
    <property type="entry name" value="DALR_2"/>
    <property type="match status" value="1"/>
</dbReference>
<dbReference type="SUPFAM" id="SSF47323">
    <property type="entry name" value="Anticodon-binding domain of a subclass of class I aminoacyl-tRNA synthetases"/>
    <property type="match status" value="1"/>
</dbReference>
<dbReference type="SUPFAM" id="SSF52374">
    <property type="entry name" value="Nucleotidylyl transferase"/>
    <property type="match status" value="1"/>
</dbReference>
<comment type="catalytic activity">
    <reaction evidence="1">
        <text>tRNA(Cys) + L-cysteine + ATP = L-cysteinyl-tRNA(Cys) + AMP + diphosphate</text>
        <dbReference type="Rhea" id="RHEA:17773"/>
        <dbReference type="Rhea" id="RHEA-COMP:9661"/>
        <dbReference type="Rhea" id="RHEA-COMP:9679"/>
        <dbReference type="ChEBI" id="CHEBI:30616"/>
        <dbReference type="ChEBI" id="CHEBI:33019"/>
        <dbReference type="ChEBI" id="CHEBI:35235"/>
        <dbReference type="ChEBI" id="CHEBI:78442"/>
        <dbReference type="ChEBI" id="CHEBI:78517"/>
        <dbReference type="ChEBI" id="CHEBI:456215"/>
        <dbReference type="EC" id="6.1.1.16"/>
    </reaction>
</comment>
<comment type="cofactor">
    <cofactor evidence="1">
        <name>Zn(2+)</name>
        <dbReference type="ChEBI" id="CHEBI:29105"/>
    </cofactor>
    <text evidence="1">Binds 1 zinc ion per subunit.</text>
</comment>
<comment type="subunit">
    <text evidence="1">Monomer.</text>
</comment>
<comment type="subcellular location">
    <subcellularLocation>
        <location evidence="1">Cytoplasm</location>
    </subcellularLocation>
</comment>
<comment type="similarity">
    <text evidence="1">Belongs to the class-I aminoacyl-tRNA synthetase family.</text>
</comment>
<protein>
    <recommendedName>
        <fullName evidence="1">Cysteine--tRNA ligase</fullName>
        <ecNumber evidence="1">6.1.1.16</ecNumber>
    </recommendedName>
    <alternativeName>
        <fullName evidence="1">Cysteinyl-tRNA synthetase</fullName>
        <shortName evidence="1">CysRS</shortName>
    </alternativeName>
</protein>
<keyword id="KW-0030">Aminoacyl-tRNA synthetase</keyword>
<keyword id="KW-0067">ATP-binding</keyword>
<keyword id="KW-0963">Cytoplasm</keyword>
<keyword id="KW-0436">Ligase</keyword>
<keyword id="KW-0479">Metal-binding</keyword>
<keyword id="KW-0547">Nucleotide-binding</keyword>
<keyword id="KW-0648">Protein biosynthesis</keyword>
<keyword id="KW-1185">Reference proteome</keyword>
<keyword id="KW-0862">Zinc</keyword>
<evidence type="ECO:0000255" key="1">
    <source>
        <dbReference type="HAMAP-Rule" id="MF_00041"/>
    </source>
</evidence>
<name>SYC_PELPD</name>
<accession>A1AK01</accession>
<organism>
    <name type="scientific">Pelobacter propionicus (strain DSM 2379 / NBRC 103807 / OttBd1)</name>
    <dbReference type="NCBI Taxonomy" id="338966"/>
    <lineage>
        <taxon>Bacteria</taxon>
        <taxon>Pseudomonadati</taxon>
        <taxon>Thermodesulfobacteriota</taxon>
        <taxon>Desulfuromonadia</taxon>
        <taxon>Desulfuromonadales</taxon>
        <taxon>Desulfuromonadaceae</taxon>
        <taxon>Pelobacter</taxon>
    </lineage>
</organism>
<gene>
    <name evidence="1" type="primary">cysS</name>
    <name type="ordered locus">Ppro_0031</name>
</gene>
<feature type="chain" id="PRO_1000071074" description="Cysteine--tRNA ligase">
    <location>
        <begin position="1"/>
        <end position="493"/>
    </location>
</feature>
<feature type="short sequence motif" description="'HIGH' region">
    <location>
        <begin position="31"/>
        <end position="41"/>
    </location>
</feature>
<feature type="short sequence motif" description="'KMSKS' region">
    <location>
        <begin position="266"/>
        <end position="270"/>
    </location>
</feature>
<feature type="binding site" evidence="1">
    <location>
        <position position="29"/>
    </location>
    <ligand>
        <name>Zn(2+)</name>
        <dbReference type="ChEBI" id="CHEBI:29105"/>
    </ligand>
</feature>
<feature type="binding site" evidence="1">
    <location>
        <position position="209"/>
    </location>
    <ligand>
        <name>Zn(2+)</name>
        <dbReference type="ChEBI" id="CHEBI:29105"/>
    </ligand>
</feature>
<feature type="binding site" evidence="1">
    <location>
        <position position="234"/>
    </location>
    <ligand>
        <name>Zn(2+)</name>
        <dbReference type="ChEBI" id="CHEBI:29105"/>
    </ligand>
</feature>
<feature type="binding site" evidence="1">
    <location>
        <position position="238"/>
    </location>
    <ligand>
        <name>Zn(2+)</name>
        <dbReference type="ChEBI" id="CHEBI:29105"/>
    </ligand>
</feature>
<feature type="binding site" evidence="1">
    <location>
        <position position="269"/>
    </location>
    <ligand>
        <name>ATP</name>
        <dbReference type="ChEBI" id="CHEBI:30616"/>
    </ligand>
</feature>
<reference key="1">
    <citation type="submission" date="2006-10" db="EMBL/GenBank/DDBJ databases">
        <title>Complete sequence of chromosome of Pelobacter propionicus DSM 2379.</title>
        <authorList>
            <consortium name="US DOE Joint Genome Institute"/>
            <person name="Copeland A."/>
            <person name="Lucas S."/>
            <person name="Lapidus A."/>
            <person name="Barry K."/>
            <person name="Detter J.C."/>
            <person name="Glavina del Rio T."/>
            <person name="Hammon N."/>
            <person name="Israni S."/>
            <person name="Dalin E."/>
            <person name="Tice H."/>
            <person name="Pitluck S."/>
            <person name="Saunders E."/>
            <person name="Brettin T."/>
            <person name="Bruce D."/>
            <person name="Han C."/>
            <person name="Tapia R."/>
            <person name="Schmutz J."/>
            <person name="Larimer F."/>
            <person name="Land M."/>
            <person name="Hauser L."/>
            <person name="Kyrpides N."/>
            <person name="Kim E."/>
            <person name="Lovley D."/>
            <person name="Richardson P."/>
        </authorList>
    </citation>
    <scope>NUCLEOTIDE SEQUENCE [LARGE SCALE GENOMIC DNA]</scope>
    <source>
        <strain>DSM 2379 / NBRC 103807 / OttBd1</strain>
    </source>
</reference>
<sequence>MALRIYNTLTGEKDTFVPLHPGKAGMYVCGVTVYDYCHIGHARANVVFDVIYRYLGYSGYAVTYVRNFTDIDDKIINRANQEGVDYTTISERYIEAFNQDMARLGLAKPTVEPKATDHMGGIISVIETLIAKGHAYESDGDVYYAVESFPSYLRLSGRNLEDMLAGARVEVDDRKRNPMDFALWKGSKPGEPSWDSPWGAGRPGWHIECSAMSMEYLGKTFDIHGGGKDLVFPHHENEIAQSEAANGCQFVRYWMHNGFVNINSEKMSKSLGNFFTIREVLEQYDPETLRFFILSAHYRSPIDFSDQNLNDAQAGLERIYSCLAAVDGAMEGQDVPNQPVEGAPLPPAGAELHEKLQSLISRFREAMDDDFNTAQALGVLFEAVRATNRFMAESGDQTPATLALLGQVRRLFAETGDVLGLFTSQPAAWLESIKQAKSDQMEISPQEIEQLIAERAAARTNRDFKRGDEIRDLLLQKGIQLLDSPQGTTWNIR</sequence>
<proteinExistence type="inferred from homology"/>